<comment type="function">
    <text evidence="1">A key translational regulator that binds mRNA to regulate translation initiation and/or mRNA stability. Mediates global changes in gene expression, shifting from rapid growth to stress survival by linking envelope stress, the stringent response and the catabolite repression systems. Usually binds in the 5'-UTR; binding at or near the Shine-Dalgarno sequence prevents ribosome-binding, repressing translation, binding elsewhere in the 5'-UTR can activate translation and/or stabilize the mRNA. Its function is antagonized by small RNA(s).</text>
</comment>
<comment type="subunit">
    <text evidence="1">Homodimer; the beta-strands of each monomer intercalate to form a hydrophobic core, while the alpha-helices form wings that extend away from the core.</text>
</comment>
<comment type="subcellular location">
    <subcellularLocation>
        <location evidence="1">Cytoplasm</location>
    </subcellularLocation>
</comment>
<comment type="similarity">
    <text evidence="1">Belongs to the CsrA/RsmA family.</text>
</comment>
<organism>
    <name type="scientific">Coxiella burnetii (strain RSA 493 / Nine Mile phase I)</name>
    <dbReference type="NCBI Taxonomy" id="227377"/>
    <lineage>
        <taxon>Bacteria</taxon>
        <taxon>Pseudomonadati</taxon>
        <taxon>Pseudomonadota</taxon>
        <taxon>Gammaproteobacteria</taxon>
        <taxon>Legionellales</taxon>
        <taxon>Coxiellaceae</taxon>
        <taxon>Coxiella</taxon>
    </lineage>
</organism>
<name>CSRA1_COXBU</name>
<protein>
    <recommendedName>
        <fullName evidence="1">Translational regulator CsrA 1</fullName>
    </recommendedName>
    <alternativeName>
        <fullName evidence="1">Carbon storage regulator 1</fullName>
    </alternativeName>
</protein>
<keyword id="KW-0010">Activator</keyword>
<keyword id="KW-0963">Cytoplasm</keyword>
<keyword id="KW-1185">Reference proteome</keyword>
<keyword id="KW-0678">Repressor</keyword>
<keyword id="KW-0694">RNA-binding</keyword>
<keyword id="KW-0810">Translation regulation</keyword>
<feature type="chain" id="PRO_0000177057" description="Translational regulator CsrA 1">
    <location>
        <begin position="1"/>
        <end position="68"/>
    </location>
</feature>
<sequence length="68" mass="7687">MLVLTRTNGQAIKIGNEGEITVTVLEVRGNQVRMGIDAPKHIAVHREEIYQRIQEEKPKAPPILEEVE</sequence>
<reference key="1">
    <citation type="journal article" date="2003" name="Proc. Natl. Acad. Sci. U.S.A.">
        <title>Complete genome sequence of the Q-fever pathogen, Coxiella burnetii.</title>
        <authorList>
            <person name="Seshadri R."/>
            <person name="Paulsen I.T."/>
            <person name="Eisen J.A."/>
            <person name="Read T.D."/>
            <person name="Nelson K.E."/>
            <person name="Nelson W.C."/>
            <person name="Ward N.L."/>
            <person name="Tettelin H."/>
            <person name="Davidsen T.M."/>
            <person name="Beanan M.J."/>
            <person name="DeBoy R.T."/>
            <person name="Daugherty S.C."/>
            <person name="Brinkac L.M."/>
            <person name="Madupu R."/>
            <person name="Dodson R.J."/>
            <person name="Khouri H.M."/>
            <person name="Lee K.H."/>
            <person name="Carty H.A."/>
            <person name="Scanlan D."/>
            <person name="Heinzen R.A."/>
            <person name="Thompson H.A."/>
            <person name="Samuel J.E."/>
            <person name="Fraser C.M."/>
            <person name="Heidelberg J.F."/>
        </authorList>
    </citation>
    <scope>NUCLEOTIDE SEQUENCE [LARGE SCALE GENOMIC DNA]</scope>
    <source>
        <strain>RSA 493 / Nine Mile phase I</strain>
    </source>
</reference>
<gene>
    <name evidence="1" type="primary">csrA1</name>
    <name type="synonym">csrA-1</name>
    <name type="ordered locus">CBU_0024</name>
</gene>
<dbReference type="EMBL" id="AE016828">
    <property type="protein sequence ID" value="AAO89594.1"/>
    <property type="molecule type" value="Genomic_DNA"/>
</dbReference>
<dbReference type="RefSeq" id="NP_819080.1">
    <property type="nucleotide sequence ID" value="NC_002971.3"/>
</dbReference>
<dbReference type="SMR" id="Q83FB6"/>
<dbReference type="STRING" id="227377.CBU_0024"/>
<dbReference type="DNASU" id="1207886"/>
<dbReference type="EnsemblBacteria" id="AAO89594">
    <property type="protein sequence ID" value="AAO89594"/>
    <property type="gene ID" value="CBU_0024"/>
</dbReference>
<dbReference type="GeneID" id="1207886"/>
<dbReference type="KEGG" id="cbu:CBU_0024"/>
<dbReference type="PATRIC" id="fig|227377.7.peg.23"/>
<dbReference type="eggNOG" id="COG1551">
    <property type="taxonomic scope" value="Bacteria"/>
</dbReference>
<dbReference type="HOGENOM" id="CLU_164837_2_1_6"/>
<dbReference type="OrthoDB" id="9809061at2"/>
<dbReference type="Proteomes" id="UP000002671">
    <property type="component" value="Chromosome"/>
</dbReference>
<dbReference type="GO" id="GO:0005829">
    <property type="term" value="C:cytosol"/>
    <property type="evidence" value="ECO:0000318"/>
    <property type="project" value="GO_Central"/>
</dbReference>
<dbReference type="GO" id="GO:0048027">
    <property type="term" value="F:mRNA 5'-UTR binding"/>
    <property type="evidence" value="ECO:0007669"/>
    <property type="project" value="UniProtKB-UniRule"/>
</dbReference>
<dbReference type="GO" id="GO:0006402">
    <property type="term" value="P:mRNA catabolic process"/>
    <property type="evidence" value="ECO:0007669"/>
    <property type="project" value="InterPro"/>
</dbReference>
<dbReference type="GO" id="GO:0045947">
    <property type="term" value="P:negative regulation of translational initiation"/>
    <property type="evidence" value="ECO:0007669"/>
    <property type="project" value="UniProtKB-UniRule"/>
</dbReference>
<dbReference type="GO" id="GO:0045948">
    <property type="term" value="P:positive regulation of translational initiation"/>
    <property type="evidence" value="ECO:0007669"/>
    <property type="project" value="UniProtKB-UniRule"/>
</dbReference>
<dbReference type="GO" id="GO:0006109">
    <property type="term" value="P:regulation of carbohydrate metabolic process"/>
    <property type="evidence" value="ECO:0007669"/>
    <property type="project" value="UniProtKB-UniRule"/>
</dbReference>
<dbReference type="FunFam" id="2.60.40.4380:FF:000001">
    <property type="entry name" value="Translational regulator CsrA"/>
    <property type="match status" value="1"/>
</dbReference>
<dbReference type="Gene3D" id="2.60.40.4380">
    <property type="entry name" value="Translational regulator CsrA"/>
    <property type="match status" value="1"/>
</dbReference>
<dbReference type="HAMAP" id="MF_00167">
    <property type="entry name" value="CsrA"/>
    <property type="match status" value="1"/>
</dbReference>
<dbReference type="InterPro" id="IPR003751">
    <property type="entry name" value="CsrA"/>
</dbReference>
<dbReference type="InterPro" id="IPR036107">
    <property type="entry name" value="CsrA_sf"/>
</dbReference>
<dbReference type="NCBIfam" id="TIGR00202">
    <property type="entry name" value="csrA"/>
    <property type="match status" value="1"/>
</dbReference>
<dbReference type="NCBIfam" id="NF002469">
    <property type="entry name" value="PRK01712.1"/>
    <property type="match status" value="1"/>
</dbReference>
<dbReference type="PANTHER" id="PTHR34984">
    <property type="entry name" value="CARBON STORAGE REGULATOR"/>
    <property type="match status" value="1"/>
</dbReference>
<dbReference type="PANTHER" id="PTHR34984:SF1">
    <property type="entry name" value="CARBON STORAGE REGULATOR"/>
    <property type="match status" value="1"/>
</dbReference>
<dbReference type="Pfam" id="PF02599">
    <property type="entry name" value="CsrA"/>
    <property type="match status" value="1"/>
</dbReference>
<dbReference type="SUPFAM" id="SSF117130">
    <property type="entry name" value="CsrA-like"/>
    <property type="match status" value="1"/>
</dbReference>
<proteinExistence type="inferred from homology"/>
<evidence type="ECO:0000255" key="1">
    <source>
        <dbReference type="HAMAP-Rule" id="MF_00167"/>
    </source>
</evidence>
<accession>Q83FB6</accession>